<comment type="function">
    <text evidence="1">Catalyzes the conversion of L-lactate to pyruvate. Is coupled to the respiratory chain.</text>
</comment>
<comment type="catalytic activity">
    <reaction evidence="1">
        <text>(S)-lactate + A = pyruvate + AH2</text>
        <dbReference type="Rhea" id="RHEA:45816"/>
        <dbReference type="ChEBI" id="CHEBI:13193"/>
        <dbReference type="ChEBI" id="CHEBI:15361"/>
        <dbReference type="ChEBI" id="CHEBI:16651"/>
        <dbReference type="ChEBI" id="CHEBI:17499"/>
    </reaction>
</comment>
<comment type="cofactor">
    <cofactor evidence="1">
        <name>FMN</name>
        <dbReference type="ChEBI" id="CHEBI:58210"/>
    </cofactor>
</comment>
<comment type="subcellular location">
    <subcellularLocation>
        <location evidence="1">Cell inner membrane</location>
        <topology evidence="1">Peripheral membrane protein</topology>
    </subcellularLocation>
</comment>
<comment type="similarity">
    <text evidence="1">Belongs to the FMN-dependent alpha-hydroxy acid dehydrogenase family.</text>
</comment>
<reference key="1">
    <citation type="journal article" date="2004" name="Nucleic Acids Res.">
        <title>Unique features revealed by the genome sequence of Acinetobacter sp. ADP1, a versatile and naturally transformation competent bacterium.</title>
        <authorList>
            <person name="Barbe V."/>
            <person name="Vallenet D."/>
            <person name="Fonknechten N."/>
            <person name="Kreimeyer A."/>
            <person name="Oztas S."/>
            <person name="Labarre L."/>
            <person name="Cruveiller S."/>
            <person name="Robert C."/>
            <person name="Duprat S."/>
            <person name="Wincker P."/>
            <person name="Ornston L.N."/>
            <person name="Weissenbach J."/>
            <person name="Marliere P."/>
            <person name="Cohen G.N."/>
            <person name="Medigue C."/>
        </authorList>
    </citation>
    <scope>NUCLEOTIDE SEQUENCE [LARGE SCALE GENOMIC DNA]</scope>
    <source>
        <strain>ATCC 33305 / BD413 / ADP1</strain>
    </source>
</reference>
<accession>Q6FFS1</accession>
<sequence length="384" mass="42131">MIISSSNDYREAAKRRLPPFLFHYIDGGAYAEYTLKRNVEDLSQIALRQRVLNDMSSLSLETKLFNETLSMPVALSPVGLTGMYARRGEVQAAVAADKKGIPFTMSTVSVCPIEEVTPAIKRPMWFQLYVLRDRGFMKNALERAKAAGCSTLVFTVDMPVPGARYRDAHSGMSGPNAAMRRYLQSMMHPQWAWDVGLLGRPHDLGNISKYLGKTTGLEDYISWLGSNFDPSISWKDLEWIREFWDGPMVIKGILDPEDAKDAVRFGADGIVVSNHGGRQLDGVMSSARAMPAIAEAVKGDLTILADSGIRNGLDVVRMLALGADSVMLGRAFIYALAAQGGQGVSNLLDLIDKEMRVAMTLTGAKTIADINESCLVEMNKLIQS</sequence>
<protein>
    <recommendedName>
        <fullName evidence="1">L-lactate dehydrogenase</fullName>
        <ecNumber evidence="1">1.1.-.-</ecNumber>
    </recommendedName>
</protein>
<proteinExistence type="inferred from homology"/>
<feature type="chain" id="PRO_0000206329" description="L-lactate dehydrogenase">
    <location>
        <begin position="1"/>
        <end position="384"/>
    </location>
</feature>
<feature type="domain" description="FMN hydroxy acid dehydrogenase" evidence="1">
    <location>
        <begin position="1"/>
        <end position="380"/>
    </location>
</feature>
<feature type="active site" description="Proton acceptor" evidence="1">
    <location>
        <position position="275"/>
    </location>
</feature>
<feature type="binding site" evidence="1">
    <location>
        <position position="24"/>
    </location>
    <ligand>
        <name>substrate</name>
    </ligand>
</feature>
<feature type="binding site" evidence="1">
    <location>
        <position position="106"/>
    </location>
    <ligand>
        <name>FMN</name>
        <dbReference type="ChEBI" id="CHEBI:58210"/>
    </ligand>
</feature>
<feature type="binding site" evidence="1">
    <location>
        <position position="127"/>
    </location>
    <ligand>
        <name>FMN</name>
        <dbReference type="ChEBI" id="CHEBI:58210"/>
    </ligand>
</feature>
<feature type="binding site" evidence="1">
    <location>
        <position position="129"/>
    </location>
    <ligand>
        <name>substrate</name>
    </ligand>
</feature>
<feature type="binding site" evidence="1">
    <location>
        <position position="155"/>
    </location>
    <ligand>
        <name>FMN</name>
        <dbReference type="ChEBI" id="CHEBI:58210"/>
    </ligand>
</feature>
<feature type="binding site" evidence="1">
    <location>
        <position position="164"/>
    </location>
    <ligand>
        <name>substrate</name>
    </ligand>
</feature>
<feature type="binding site" evidence="1">
    <location>
        <position position="251"/>
    </location>
    <ligand>
        <name>FMN</name>
        <dbReference type="ChEBI" id="CHEBI:58210"/>
    </ligand>
</feature>
<feature type="binding site" evidence="1">
    <location>
        <position position="278"/>
    </location>
    <ligand>
        <name>substrate</name>
    </ligand>
</feature>
<feature type="binding site" evidence="1">
    <location>
        <begin position="306"/>
        <end position="330"/>
    </location>
    <ligand>
        <name>FMN</name>
        <dbReference type="ChEBI" id="CHEBI:58210"/>
    </ligand>
</feature>
<keyword id="KW-0997">Cell inner membrane</keyword>
<keyword id="KW-1003">Cell membrane</keyword>
<keyword id="KW-0285">Flavoprotein</keyword>
<keyword id="KW-0288">FMN</keyword>
<keyword id="KW-0472">Membrane</keyword>
<keyword id="KW-0560">Oxidoreductase</keyword>
<dbReference type="EC" id="1.1.-.-" evidence="1"/>
<dbReference type="EMBL" id="CR543861">
    <property type="protein sequence ID" value="CAG67086.1"/>
    <property type="molecule type" value="Genomic_DNA"/>
</dbReference>
<dbReference type="RefSeq" id="WP_004930738.1">
    <property type="nucleotide sequence ID" value="NC_005966.1"/>
</dbReference>
<dbReference type="SMR" id="Q6FFS1"/>
<dbReference type="STRING" id="202950.GCA_001485005_01847"/>
<dbReference type="GeneID" id="45232631"/>
<dbReference type="KEGG" id="aci:ACIAD0108"/>
<dbReference type="eggNOG" id="COG1304">
    <property type="taxonomic scope" value="Bacteria"/>
</dbReference>
<dbReference type="HOGENOM" id="CLU_020639_0_0_6"/>
<dbReference type="OrthoDB" id="9770452at2"/>
<dbReference type="BioCyc" id="ASP62977:ACIAD_RS00505-MONOMER"/>
<dbReference type="Proteomes" id="UP000000430">
    <property type="component" value="Chromosome"/>
</dbReference>
<dbReference type="GO" id="GO:0005886">
    <property type="term" value="C:plasma membrane"/>
    <property type="evidence" value="ECO:0007669"/>
    <property type="project" value="UniProtKB-SubCell"/>
</dbReference>
<dbReference type="GO" id="GO:0010181">
    <property type="term" value="F:FMN binding"/>
    <property type="evidence" value="ECO:0007669"/>
    <property type="project" value="InterPro"/>
</dbReference>
<dbReference type="GO" id="GO:0004459">
    <property type="term" value="F:L-lactate dehydrogenase activity"/>
    <property type="evidence" value="ECO:0007669"/>
    <property type="project" value="UniProtKB-UniRule"/>
</dbReference>
<dbReference type="GO" id="GO:0009060">
    <property type="term" value="P:aerobic respiration"/>
    <property type="evidence" value="ECO:0007669"/>
    <property type="project" value="TreeGrafter"/>
</dbReference>
<dbReference type="GO" id="GO:0006089">
    <property type="term" value="P:lactate metabolic process"/>
    <property type="evidence" value="ECO:0007669"/>
    <property type="project" value="UniProtKB-UniRule"/>
</dbReference>
<dbReference type="CDD" id="cd02809">
    <property type="entry name" value="alpha_hydroxyacid_oxid_FMN"/>
    <property type="match status" value="1"/>
</dbReference>
<dbReference type="FunFam" id="3.20.20.70:FF:000029">
    <property type="entry name" value="L-lactate dehydrogenase"/>
    <property type="match status" value="1"/>
</dbReference>
<dbReference type="Gene3D" id="3.20.20.70">
    <property type="entry name" value="Aldolase class I"/>
    <property type="match status" value="1"/>
</dbReference>
<dbReference type="HAMAP" id="MF_01559">
    <property type="entry name" value="L_lact_dehydr"/>
    <property type="match status" value="1"/>
</dbReference>
<dbReference type="InterPro" id="IPR013785">
    <property type="entry name" value="Aldolase_TIM"/>
</dbReference>
<dbReference type="InterPro" id="IPR012133">
    <property type="entry name" value="Alpha-hydoxy_acid_DH_FMN"/>
</dbReference>
<dbReference type="InterPro" id="IPR000262">
    <property type="entry name" value="FMN-dep_DH"/>
</dbReference>
<dbReference type="InterPro" id="IPR037396">
    <property type="entry name" value="FMN_HAD"/>
</dbReference>
<dbReference type="InterPro" id="IPR008259">
    <property type="entry name" value="FMN_hydac_DH_AS"/>
</dbReference>
<dbReference type="InterPro" id="IPR020920">
    <property type="entry name" value="LldD"/>
</dbReference>
<dbReference type="NCBIfam" id="NF033901">
    <property type="entry name" value="L_lactate_LldD"/>
    <property type="match status" value="1"/>
</dbReference>
<dbReference type="NCBIfam" id="NF008398">
    <property type="entry name" value="PRK11197.1"/>
    <property type="match status" value="1"/>
</dbReference>
<dbReference type="PANTHER" id="PTHR10578:SF85">
    <property type="entry name" value="L-LACTATE DEHYDROGENASE"/>
    <property type="match status" value="1"/>
</dbReference>
<dbReference type="PANTHER" id="PTHR10578">
    <property type="entry name" value="S -2-HYDROXY-ACID OXIDASE-RELATED"/>
    <property type="match status" value="1"/>
</dbReference>
<dbReference type="Pfam" id="PF01070">
    <property type="entry name" value="FMN_dh"/>
    <property type="match status" value="1"/>
</dbReference>
<dbReference type="PIRSF" id="PIRSF000138">
    <property type="entry name" value="Al-hdrx_acd_dh"/>
    <property type="match status" value="1"/>
</dbReference>
<dbReference type="SUPFAM" id="SSF51395">
    <property type="entry name" value="FMN-linked oxidoreductases"/>
    <property type="match status" value="1"/>
</dbReference>
<dbReference type="PROSITE" id="PS00557">
    <property type="entry name" value="FMN_HYDROXY_ACID_DH_1"/>
    <property type="match status" value="1"/>
</dbReference>
<dbReference type="PROSITE" id="PS51349">
    <property type="entry name" value="FMN_HYDROXY_ACID_DH_2"/>
    <property type="match status" value="1"/>
</dbReference>
<organism>
    <name type="scientific">Acinetobacter baylyi (strain ATCC 33305 / BD413 / ADP1)</name>
    <dbReference type="NCBI Taxonomy" id="62977"/>
    <lineage>
        <taxon>Bacteria</taxon>
        <taxon>Pseudomonadati</taxon>
        <taxon>Pseudomonadota</taxon>
        <taxon>Gammaproteobacteria</taxon>
        <taxon>Moraxellales</taxon>
        <taxon>Moraxellaceae</taxon>
        <taxon>Acinetobacter</taxon>
    </lineage>
</organism>
<evidence type="ECO:0000255" key="1">
    <source>
        <dbReference type="HAMAP-Rule" id="MF_01559"/>
    </source>
</evidence>
<gene>
    <name evidence="1" type="primary">lldD</name>
    <name type="ordered locus">ACIAD0108</name>
</gene>
<name>LLDD_ACIAD</name>